<dbReference type="EMBL" id="CP000709">
    <property type="protein sequence ID" value="ABQ62391.1"/>
    <property type="molecule type" value="Genomic_DNA"/>
</dbReference>
<dbReference type="RefSeq" id="WP_006015129.1">
    <property type="nucleotide sequence ID" value="NC_009504.1"/>
</dbReference>
<dbReference type="SMR" id="A5VTQ7"/>
<dbReference type="GeneID" id="45125561"/>
<dbReference type="KEGG" id="bov:BOV_A0137"/>
<dbReference type="HOGENOM" id="CLU_147249_2_0_5"/>
<dbReference type="PhylomeDB" id="A5VTQ7"/>
<dbReference type="Proteomes" id="UP000006383">
    <property type="component" value="Chromosome II"/>
</dbReference>
<dbReference type="GO" id="GO:0009425">
    <property type="term" value="C:bacterial-type flagellum basal body"/>
    <property type="evidence" value="ECO:0007669"/>
    <property type="project" value="UniProtKB-SubCell"/>
</dbReference>
<dbReference type="GO" id="GO:0003774">
    <property type="term" value="F:cytoskeletal motor activity"/>
    <property type="evidence" value="ECO:0007669"/>
    <property type="project" value="InterPro"/>
</dbReference>
<dbReference type="GO" id="GO:0005198">
    <property type="term" value="F:structural molecule activity"/>
    <property type="evidence" value="ECO:0007669"/>
    <property type="project" value="InterPro"/>
</dbReference>
<dbReference type="GO" id="GO:0071973">
    <property type="term" value="P:bacterial-type flagellum-dependent cell motility"/>
    <property type="evidence" value="ECO:0007669"/>
    <property type="project" value="InterPro"/>
</dbReference>
<dbReference type="HAMAP" id="MF_00724">
    <property type="entry name" value="FliE"/>
    <property type="match status" value="1"/>
</dbReference>
<dbReference type="InterPro" id="IPR001624">
    <property type="entry name" value="FliE"/>
</dbReference>
<dbReference type="PANTHER" id="PTHR34653">
    <property type="match status" value="1"/>
</dbReference>
<dbReference type="PANTHER" id="PTHR34653:SF1">
    <property type="entry name" value="FLAGELLAR HOOK-BASAL BODY COMPLEX PROTEIN FLIE"/>
    <property type="match status" value="1"/>
</dbReference>
<dbReference type="Pfam" id="PF02049">
    <property type="entry name" value="FliE"/>
    <property type="match status" value="1"/>
</dbReference>
<dbReference type="PRINTS" id="PR01006">
    <property type="entry name" value="FLGHOOKFLIE"/>
</dbReference>
<sequence length="111" mass="11538">MYDSIMSVSARNALSRLSETVAEKGVGSASAPQAVPAAPGASFGEVLSQMTGSVSQKLQAAEATSIQGIKGDAPVRDVVSSVMEAEQSLQTVIAIRDKIVQAYLEISRMPI</sequence>
<accession>A5VTQ7</accession>
<gene>
    <name evidence="1" type="primary">fliE</name>
    <name type="ordered locus">BOV_A0137</name>
</gene>
<reference key="1">
    <citation type="journal article" date="2009" name="PLoS ONE">
        <title>Genome degradation in Brucella ovis corresponds with narrowing of its host range and tissue tropism.</title>
        <authorList>
            <person name="Tsolis R.M."/>
            <person name="Seshadri R."/>
            <person name="Santos R.L."/>
            <person name="Sangari F.J."/>
            <person name="Lobo J.M."/>
            <person name="de Jong M.F."/>
            <person name="Ren Q."/>
            <person name="Myers G."/>
            <person name="Brinkac L.M."/>
            <person name="Nelson W.C."/>
            <person name="Deboy R.T."/>
            <person name="Angiuoli S."/>
            <person name="Khouri H."/>
            <person name="Dimitrov G."/>
            <person name="Robinson J.R."/>
            <person name="Mulligan S."/>
            <person name="Walker R.L."/>
            <person name="Elzer P.E."/>
            <person name="Hassan K.A."/>
            <person name="Paulsen I.T."/>
        </authorList>
    </citation>
    <scope>NUCLEOTIDE SEQUENCE [LARGE SCALE GENOMIC DNA]</scope>
    <source>
        <strain>ATCC 25840 / 63/290 / NCTC 10512</strain>
    </source>
</reference>
<comment type="subcellular location">
    <subcellularLocation>
        <location evidence="1">Bacterial flagellum basal body</location>
    </subcellularLocation>
</comment>
<comment type="similarity">
    <text evidence="1">Belongs to the FliE family.</text>
</comment>
<keyword id="KW-0975">Bacterial flagellum</keyword>
<name>FLIE_BRUO2</name>
<feature type="chain" id="PRO_1000045845" description="Flagellar hook-basal body complex protein FliE">
    <location>
        <begin position="1"/>
        <end position="111"/>
    </location>
</feature>
<protein>
    <recommendedName>
        <fullName evidence="1">Flagellar hook-basal body complex protein FliE</fullName>
    </recommendedName>
</protein>
<evidence type="ECO:0000255" key="1">
    <source>
        <dbReference type="HAMAP-Rule" id="MF_00724"/>
    </source>
</evidence>
<proteinExistence type="inferred from homology"/>
<organism>
    <name type="scientific">Brucella ovis (strain ATCC 25840 / 63/290 / NCTC 10512)</name>
    <dbReference type="NCBI Taxonomy" id="444178"/>
    <lineage>
        <taxon>Bacteria</taxon>
        <taxon>Pseudomonadati</taxon>
        <taxon>Pseudomonadota</taxon>
        <taxon>Alphaproteobacteria</taxon>
        <taxon>Hyphomicrobiales</taxon>
        <taxon>Brucellaceae</taxon>
        <taxon>Brucella/Ochrobactrum group</taxon>
        <taxon>Brucella</taxon>
    </lineage>
</organism>